<comment type="function">
    <text evidence="1">Catalyzes the reversible formation of acyl-phosphate (acyl-PO(4)) from acyl-[acyl-carrier-protein] (acyl-ACP). This enzyme utilizes acyl-ACP as fatty acyl donor, but not acyl-CoA.</text>
</comment>
<comment type="catalytic activity">
    <reaction evidence="1">
        <text>a fatty acyl-[ACP] + phosphate = an acyl phosphate + holo-[ACP]</text>
        <dbReference type="Rhea" id="RHEA:42292"/>
        <dbReference type="Rhea" id="RHEA-COMP:9685"/>
        <dbReference type="Rhea" id="RHEA-COMP:14125"/>
        <dbReference type="ChEBI" id="CHEBI:43474"/>
        <dbReference type="ChEBI" id="CHEBI:59918"/>
        <dbReference type="ChEBI" id="CHEBI:64479"/>
        <dbReference type="ChEBI" id="CHEBI:138651"/>
        <dbReference type="EC" id="2.3.1.274"/>
    </reaction>
</comment>
<comment type="pathway">
    <text evidence="1">Lipid metabolism; phospholipid metabolism.</text>
</comment>
<comment type="subunit">
    <text evidence="1">Homodimer. Probably interacts with PlsY.</text>
</comment>
<comment type="subcellular location">
    <subcellularLocation>
        <location evidence="1">Cytoplasm</location>
    </subcellularLocation>
    <text evidence="1">Associated with the membrane possibly through PlsY.</text>
</comment>
<comment type="similarity">
    <text evidence="1">Belongs to the PlsX family.</text>
</comment>
<protein>
    <recommendedName>
        <fullName evidence="1">Phosphate acyltransferase</fullName>
        <ecNumber evidence="1">2.3.1.274</ecNumber>
    </recommendedName>
    <alternativeName>
        <fullName evidence="1">Acyl-ACP phosphotransacylase</fullName>
    </alternativeName>
    <alternativeName>
        <fullName evidence="1">Acyl-[acyl-carrier-protein]--phosphate acyltransferase</fullName>
    </alternativeName>
    <alternativeName>
        <fullName evidence="1">Phosphate-acyl-ACP acyltransferase</fullName>
    </alternativeName>
</protein>
<proteinExistence type="inferred from homology"/>
<sequence>MTRLTLALDVMGGDFGPSVTVPAALQALNSNSQLTLLLVGNPDTITPLLAKADFEQRSRLQIIPAQSVIASNARPSQAIRASRGSSMRVALELVKEGRAQACVSAGNTGALMGLAKLLLKPLEGIERPALVTVLPHQQKGKTVVLDLGANVDCDSTMLVQFAIMGSVLAEEVVGIPNPRVALLNIGEEEVKGLDSIRDASAVLKTISSVNYIGYLEANELLTGKTDVLVCDGFTGNVTLKTMEGVVRMFLSLLKSQGEGKKRSWWLLLLKRWLQKSLTRRFSHLNPDQYNGACLLGLRGTVIKSHGAANQRAFAVAIEQAVQAVQRQVPQRIAARLKSVYPAGFELLEDERGKKPNHR</sequence>
<accession>B7LT48</accession>
<feature type="chain" id="PRO_1000116381" description="Phosphate acyltransferase">
    <location>
        <begin position="1"/>
        <end position="358"/>
    </location>
</feature>
<organism>
    <name type="scientific">Escherichia fergusonii (strain ATCC 35469 / DSM 13698 / CCUG 18766 / IAM 14443 / JCM 21226 / LMG 7866 / NBRC 102419 / NCTC 12128 / CDC 0568-73)</name>
    <dbReference type="NCBI Taxonomy" id="585054"/>
    <lineage>
        <taxon>Bacteria</taxon>
        <taxon>Pseudomonadati</taxon>
        <taxon>Pseudomonadota</taxon>
        <taxon>Gammaproteobacteria</taxon>
        <taxon>Enterobacterales</taxon>
        <taxon>Enterobacteriaceae</taxon>
        <taxon>Escherichia</taxon>
    </lineage>
</organism>
<gene>
    <name evidence="1" type="primary">plsX</name>
    <name type="ordered locus">EFER_1837</name>
</gene>
<reference key="1">
    <citation type="journal article" date="2009" name="PLoS Genet.">
        <title>Organised genome dynamics in the Escherichia coli species results in highly diverse adaptive paths.</title>
        <authorList>
            <person name="Touchon M."/>
            <person name="Hoede C."/>
            <person name="Tenaillon O."/>
            <person name="Barbe V."/>
            <person name="Baeriswyl S."/>
            <person name="Bidet P."/>
            <person name="Bingen E."/>
            <person name="Bonacorsi S."/>
            <person name="Bouchier C."/>
            <person name="Bouvet O."/>
            <person name="Calteau A."/>
            <person name="Chiapello H."/>
            <person name="Clermont O."/>
            <person name="Cruveiller S."/>
            <person name="Danchin A."/>
            <person name="Diard M."/>
            <person name="Dossat C."/>
            <person name="Karoui M.E."/>
            <person name="Frapy E."/>
            <person name="Garry L."/>
            <person name="Ghigo J.M."/>
            <person name="Gilles A.M."/>
            <person name="Johnson J."/>
            <person name="Le Bouguenec C."/>
            <person name="Lescat M."/>
            <person name="Mangenot S."/>
            <person name="Martinez-Jehanne V."/>
            <person name="Matic I."/>
            <person name="Nassif X."/>
            <person name="Oztas S."/>
            <person name="Petit M.A."/>
            <person name="Pichon C."/>
            <person name="Rouy Z."/>
            <person name="Ruf C.S."/>
            <person name="Schneider D."/>
            <person name="Tourret J."/>
            <person name="Vacherie B."/>
            <person name="Vallenet D."/>
            <person name="Medigue C."/>
            <person name="Rocha E.P.C."/>
            <person name="Denamur E."/>
        </authorList>
    </citation>
    <scope>NUCLEOTIDE SEQUENCE [LARGE SCALE GENOMIC DNA]</scope>
    <source>
        <strain>ATCC 35469 / DSM 13698 / BCRC 15582 / CCUG 18766 / IAM 14443 / JCM 21226 / LMG 7866 / NBRC 102419 / NCTC 12128 / CDC 0568-73</strain>
    </source>
</reference>
<name>PLSX_ESCF3</name>
<keyword id="KW-0963">Cytoplasm</keyword>
<keyword id="KW-0444">Lipid biosynthesis</keyword>
<keyword id="KW-0443">Lipid metabolism</keyword>
<keyword id="KW-0594">Phospholipid biosynthesis</keyword>
<keyword id="KW-1208">Phospholipid metabolism</keyword>
<keyword id="KW-0808">Transferase</keyword>
<evidence type="ECO:0000255" key="1">
    <source>
        <dbReference type="HAMAP-Rule" id="MF_00019"/>
    </source>
</evidence>
<dbReference type="EC" id="2.3.1.274" evidence="1"/>
<dbReference type="EMBL" id="CU928158">
    <property type="protein sequence ID" value="CAQ89352.1"/>
    <property type="molecule type" value="Genomic_DNA"/>
</dbReference>
<dbReference type="RefSeq" id="WP_015953459.1">
    <property type="nucleotide sequence ID" value="NC_011740.1"/>
</dbReference>
<dbReference type="SMR" id="B7LT48"/>
<dbReference type="GeneID" id="75057125"/>
<dbReference type="KEGG" id="efe:EFER_1837"/>
<dbReference type="HOGENOM" id="CLU_039379_1_0_6"/>
<dbReference type="OrthoDB" id="9806408at2"/>
<dbReference type="UniPathway" id="UPA00085"/>
<dbReference type="Proteomes" id="UP000000745">
    <property type="component" value="Chromosome"/>
</dbReference>
<dbReference type="GO" id="GO:0005737">
    <property type="term" value="C:cytoplasm"/>
    <property type="evidence" value="ECO:0007669"/>
    <property type="project" value="UniProtKB-SubCell"/>
</dbReference>
<dbReference type="GO" id="GO:0043811">
    <property type="term" value="F:phosphate:acyl-[acyl carrier protein] acyltransferase activity"/>
    <property type="evidence" value="ECO:0007669"/>
    <property type="project" value="UniProtKB-UniRule"/>
</dbReference>
<dbReference type="GO" id="GO:0006633">
    <property type="term" value="P:fatty acid biosynthetic process"/>
    <property type="evidence" value="ECO:0007669"/>
    <property type="project" value="UniProtKB-UniRule"/>
</dbReference>
<dbReference type="GO" id="GO:0008654">
    <property type="term" value="P:phospholipid biosynthetic process"/>
    <property type="evidence" value="ECO:0007669"/>
    <property type="project" value="UniProtKB-KW"/>
</dbReference>
<dbReference type="FunFam" id="3.40.718.10:FF:000008">
    <property type="entry name" value="Phosphate acyltransferase"/>
    <property type="match status" value="1"/>
</dbReference>
<dbReference type="Gene3D" id="3.40.718.10">
    <property type="entry name" value="Isopropylmalate Dehydrogenase"/>
    <property type="match status" value="1"/>
</dbReference>
<dbReference type="HAMAP" id="MF_00019">
    <property type="entry name" value="PlsX"/>
    <property type="match status" value="1"/>
</dbReference>
<dbReference type="InterPro" id="IPR003664">
    <property type="entry name" value="FA_synthesis"/>
</dbReference>
<dbReference type="InterPro" id="IPR012281">
    <property type="entry name" value="Phospholipid_synth_PlsX-like"/>
</dbReference>
<dbReference type="NCBIfam" id="TIGR00182">
    <property type="entry name" value="plsX"/>
    <property type="match status" value="1"/>
</dbReference>
<dbReference type="PANTHER" id="PTHR30100">
    <property type="entry name" value="FATTY ACID/PHOSPHOLIPID SYNTHESIS PROTEIN PLSX"/>
    <property type="match status" value="1"/>
</dbReference>
<dbReference type="PANTHER" id="PTHR30100:SF1">
    <property type="entry name" value="PHOSPHATE ACYLTRANSFERASE"/>
    <property type="match status" value="1"/>
</dbReference>
<dbReference type="Pfam" id="PF02504">
    <property type="entry name" value="FA_synthesis"/>
    <property type="match status" value="1"/>
</dbReference>
<dbReference type="PIRSF" id="PIRSF002465">
    <property type="entry name" value="Phsphlp_syn_PlsX"/>
    <property type="match status" value="1"/>
</dbReference>
<dbReference type="SUPFAM" id="SSF53659">
    <property type="entry name" value="Isocitrate/Isopropylmalate dehydrogenase-like"/>
    <property type="match status" value="1"/>
</dbReference>